<organism>
    <name type="scientific">Chlamydia trachomatis serovar L2b (strain UCH-1/proctitis)</name>
    <dbReference type="NCBI Taxonomy" id="471473"/>
    <lineage>
        <taxon>Bacteria</taxon>
        <taxon>Pseudomonadati</taxon>
        <taxon>Chlamydiota</taxon>
        <taxon>Chlamydiia</taxon>
        <taxon>Chlamydiales</taxon>
        <taxon>Chlamydiaceae</taxon>
        <taxon>Chlamydia/Chlamydophila group</taxon>
        <taxon>Chlamydia</taxon>
    </lineage>
</organism>
<accession>B0BAX0</accession>
<gene>
    <name evidence="1" type="primary">ispH</name>
    <name type="ordered locus">CTLon_0234</name>
</gene>
<evidence type="ECO:0000255" key="1">
    <source>
        <dbReference type="HAMAP-Rule" id="MF_00191"/>
    </source>
</evidence>
<name>ISPH_CHLTB</name>
<proteinExistence type="inferred from homology"/>
<keyword id="KW-0004">4Fe-4S</keyword>
<keyword id="KW-0408">Iron</keyword>
<keyword id="KW-0411">Iron-sulfur</keyword>
<keyword id="KW-0414">Isoprene biosynthesis</keyword>
<keyword id="KW-0479">Metal-binding</keyword>
<keyword id="KW-0560">Oxidoreductase</keyword>
<reference key="1">
    <citation type="journal article" date="2008" name="Genome Res.">
        <title>Chlamydia trachomatis: genome sequence analysis of lymphogranuloma venereum isolates.</title>
        <authorList>
            <person name="Thomson N.R."/>
            <person name="Holden M.T.G."/>
            <person name="Carder C."/>
            <person name="Lennard N."/>
            <person name="Lockey S.J."/>
            <person name="Marsh P."/>
            <person name="Skipp P."/>
            <person name="O'Connor C.D."/>
            <person name="Goodhead I."/>
            <person name="Norbertzcak H."/>
            <person name="Harris B."/>
            <person name="Ormond D."/>
            <person name="Rance R."/>
            <person name="Quail M.A."/>
            <person name="Parkhill J."/>
            <person name="Stephens R.S."/>
            <person name="Clarke I.N."/>
        </authorList>
    </citation>
    <scope>NUCLEOTIDE SEQUENCE [LARGE SCALE GENOMIC DNA]</scope>
    <source>
        <strain>UCH-1/proctitis</strain>
    </source>
</reference>
<dbReference type="EC" id="1.17.7.4" evidence="1"/>
<dbReference type="EMBL" id="AM884177">
    <property type="protein sequence ID" value="CAP06632.1"/>
    <property type="molecule type" value="Genomic_DNA"/>
</dbReference>
<dbReference type="RefSeq" id="WP_012263570.1">
    <property type="nucleotide sequence ID" value="NC_010280.2"/>
</dbReference>
<dbReference type="SMR" id="B0BAX0"/>
<dbReference type="KEGG" id="ctl:CTLon_0234"/>
<dbReference type="HOGENOM" id="CLU_027486_1_0_0"/>
<dbReference type="UniPathway" id="UPA00056">
    <property type="reaction ID" value="UER00097"/>
</dbReference>
<dbReference type="UniPathway" id="UPA00059">
    <property type="reaction ID" value="UER00105"/>
</dbReference>
<dbReference type="Proteomes" id="UP001154401">
    <property type="component" value="Chromosome"/>
</dbReference>
<dbReference type="GO" id="GO:0051539">
    <property type="term" value="F:4 iron, 4 sulfur cluster binding"/>
    <property type="evidence" value="ECO:0007669"/>
    <property type="project" value="UniProtKB-UniRule"/>
</dbReference>
<dbReference type="GO" id="GO:0051745">
    <property type="term" value="F:4-hydroxy-3-methylbut-2-enyl diphosphate reductase activity"/>
    <property type="evidence" value="ECO:0007669"/>
    <property type="project" value="UniProtKB-UniRule"/>
</dbReference>
<dbReference type="GO" id="GO:0046872">
    <property type="term" value="F:metal ion binding"/>
    <property type="evidence" value="ECO:0007669"/>
    <property type="project" value="UniProtKB-KW"/>
</dbReference>
<dbReference type="GO" id="GO:0050992">
    <property type="term" value="P:dimethylallyl diphosphate biosynthetic process"/>
    <property type="evidence" value="ECO:0007669"/>
    <property type="project" value="UniProtKB-UniRule"/>
</dbReference>
<dbReference type="GO" id="GO:0019288">
    <property type="term" value="P:isopentenyl diphosphate biosynthetic process, methylerythritol 4-phosphate pathway"/>
    <property type="evidence" value="ECO:0007669"/>
    <property type="project" value="UniProtKB-UniRule"/>
</dbReference>
<dbReference type="GO" id="GO:0016114">
    <property type="term" value="P:terpenoid biosynthetic process"/>
    <property type="evidence" value="ECO:0007669"/>
    <property type="project" value="UniProtKB-UniRule"/>
</dbReference>
<dbReference type="CDD" id="cd13944">
    <property type="entry name" value="lytB_ispH"/>
    <property type="match status" value="1"/>
</dbReference>
<dbReference type="Gene3D" id="3.40.50.11270">
    <property type="match status" value="1"/>
</dbReference>
<dbReference type="Gene3D" id="3.40.1010.20">
    <property type="entry name" value="4-hydroxy-3-methylbut-2-enyl diphosphate reductase, catalytic domain"/>
    <property type="match status" value="2"/>
</dbReference>
<dbReference type="HAMAP" id="MF_00191">
    <property type="entry name" value="IspH"/>
    <property type="match status" value="1"/>
</dbReference>
<dbReference type="InterPro" id="IPR003451">
    <property type="entry name" value="LytB/IspH"/>
</dbReference>
<dbReference type="NCBIfam" id="TIGR00216">
    <property type="entry name" value="ispH_lytB"/>
    <property type="match status" value="1"/>
</dbReference>
<dbReference type="NCBIfam" id="NF002190">
    <property type="entry name" value="PRK01045.1-4"/>
    <property type="match status" value="1"/>
</dbReference>
<dbReference type="PANTHER" id="PTHR30426">
    <property type="entry name" value="4-HYDROXY-3-METHYLBUT-2-ENYL DIPHOSPHATE REDUCTASE"/>
    <property type="match status" value="1"/>
</dbReference>
<dbReference type="PANTHER" id="PTHR30426:SF0">
    <property type="entry name" value="4-HYDROXY-3-METHYLBUT-2-ENYL DIPHOSPHATE REDUCTASE"/>
    <property type="match status" value="1"/>
</dbReference>
<dbReference type="Pfam" id="PF02401">
    <property type="entry name" value="LYTB"/>
    <property type="match status" value="1"/>
</dbReference>
<comment type="function">
    <text evidence="1">Catalyzes the conversion of 1-hydroxy-2-methyl-2-(E)-butenyl 4-diphosphate (HMBPP) into a mixture of isopentenyl diphosphate (IPP) and dimethylallyl diphosphate (DMAPP). Acts in the terminal step of the DOXP/MEP pathway for isoprenoid precursor biosynthesis.</text>
</comment>
<comment type="catalytic activity">
    <reaction evidence="1">
        <text>isopentenyl diphosphate + 2 oxidized [2Fe-2S]-[ferredoxin] + H2O = (2E)-4-hydroxy-3-methylbut-2-enyl diphosphate + 2 reduced [2Fe-2S]-[ferredoxin] + 2 H(+)</text>
        <dbReference type="Rhea" id="RHEA:24488"/>
        <dbReference type="Rhea" id="RHEA-COMP:10000"/>
        <dbReference type="Rhea" id="RHEA-COMP:10001"/>
        <dbReference type="ChEBI" id="CHEBI:15377"/>
        <dbReference type="ChEBI" id="CHEBI:15378"/>
        <dbReference type="ChEBI" id="CHEBI:33737"/>
        <dbReference type="ChEBI" id="CHEBI:33738"/>
        <dbReference type="ChEBI" id="CHEBI:128753"/>
        <dbReference type="ChEBI" id="CHEBI:128769"/>
        <dbReference type="EC" id="1.17.7.4"/>
    </reaction>
</comment>
<comment type="catalytic activity">
    <reaction evidence="1">
        <text>dimethylallyl diphosphate + 2 oxidized [2Fe-2S]-[ferredoxin] + H2O = (2E)-4-hydroxy-3-methylbut-2-enyl diphosphate + 2 reduced [2Fe-2S]-[ferredoxin] + 2 H(+)</text>
        <dbReference type="Rhea" id="RHEA:24825"/>
        <dbReference type="Rhea" id="RHEA-COMP:10000"/>
        <dbReference type="Rhea" id="RHEA-COMP:10001"/>
        <dbReference type="ChEBI" id="CHEBI:15377"/>
        <dbReference type="ChEBI" id="CHEBI:15378"/>
        <dbReference type="ChEBI" id="CHEBI:33737"/>
        <dbReference type="ChEBI" id="CHEBI:33738"/>
        <dbReference type="ChEBI" id="CHEBI:57623"/>
        <dbReference type="ChEBI" id="CHEBI:128753"/>
        <dbReference type="EC" id="1.17.7.4"/>
    </reaction>
</comment>
<comment type="cofactor">
    <cofactor evidence="1">
        <name>[4Fe-4S] cluster</name>
        <dbReference type="ChEBI" id="CHEBI:49883"/>
    </cofactor>
    <text evidence="1">Binds 1 [4Fe-4S] cluster per subunit.</text>
</comment>
<comment type="pathway">
    <text evidence="1">Isoprenoid biosynthesis; dimethylallyl diphosphate biosynthesis; dimethylallyl diphosphate from (2E)-4-hydroxy-3-methylbutenyl diphosphate: step 1/1.</text>
</comment>
<comment type="pathway">
    <text evidence="1">Isoprenoid biosynthesis; isopentenyl diphosphate biosynthesis via DXP pathway; isopentenyl diphosphate from 1-deoxy-D-xylulose 5-phosphate: step 6/6.</text>
</comment>
<comment type="similarity">
    <text evidence="1">Belongs to the IspH family.</text>
</comment>
<sequence length="307" mass="34221">MRKIILCSPRGFCAGVIRAIQTVEVALEKWGRPIYVKHEIVHNRHVVDKLREKGAIFIEDLQEVPRNSRVIFSAHGVPPSLREEATERGLIAIDATCGLVTKVHSAVKMYAKKGYHIILIGKRKHVEIIGIRGEAPDQITVVENIAEVEALPFSAQDPLFYVTQTTLSMDDAADIVAALKARYPQIFTLPSSSICYATQNRQGALRNILPQVDFVYVIGDRQSSNSNRLREVAERRGVTARLVNHPDEVTEEILQYSGNIGITAGASTPEDVVQACLMKLQELIPDLSIEMDLFVEEDTVFQLPKEL</sequence>
<protein>
    <recommendedName>
        <fullName evidence="1">4-hydroxy-3-methylbut-2-enyl diphosphate reductase</fullName>
        <shortName evidence="1">HMBPP reductase</shortName>
        <ecNumber evidence="1">1.17.7.4</ecNumber>
    </recommendedName>
</protein>
<feature type="chain" id="PRO_1000098941" description="4-hydroxy-3-methylbut-2-enyl diphosphate reductase">
    <location>
        <begin position="1"/>
        <end position="307"/>
    </location>
</feature>
<feature type="active site" description="Proton donor" evidence="1">
    <location>
        <position position="127"/>
    </location>
</feature>
<feature type="binding site" evidence="1">
    <location>
        <position position="13"/>
    </location>
    <ligand>
        <name>[4Fe-4S] cluster</name>
        <dbReference type="ChEBI" id="CHEBI:49883"/>
    </ligand>
</feature>
<feature type="binding site" evidence="1">
    <location>
        <position position="42"/>
    </location>
    <ligand>
        <name>(2E)-4-hydroxy-3-methylbut-2-enyl diphosphate</name>
        <dbReference type="ChEBI" id="CHEBI:128753"/>
    </ligand>
</feature>
<feature type="binding site" evidence="1">
    <location>
        <position position="42"/>
    </location>
    <ligand>
        <name>dimethylallyl diphosphate</name>
        <dbReference type="ChEBI" id="CHEBI:57623"/>
    </ligand>
</feature>
<feature type="binding site" evidence="1">
    <location>
        <position position="42"/>
    </location>
    <ligand>
        <name>isopentenyl diphosphate</name>
        <dbReference type="ChEBI" id="CHEBI:128769"/>
    </ligand>
</feature>
<feature type="binding site" evidence="1">
    <location>
        <position position="75"/>
    </location>
    <ligand>
        <name>(2E)-4-hydroxy-3-methylbut-2-enyl diphosphate</name>
        <dbReference type="ChEBI" id="CHEBI:128753"/>
    </ligand>
</feature>
<feature type="binding site" evidence="1">
    <location>
        <position position="75"/>
    </location>
    <ligand>
        <name>dimethylallyl diphosphate</name>
        <dbReference type="ChEBI" id="CHEBI:57623"/>
    </ligand>
</feature>
<feature type="binding site" evidence="1">
    <location>
        <position position="75"/>
    </location>
    <ligand>
        <name>isopentenyl diphosphate</name>
        <dbReference type="ChEBI" id="CHEBI:128769"/>
    </ligand>
</feature>
<feature type="binding site" evidence="1">
    <location>
        <position position="97"/>
    </location>
    <ligand>
        <name>[4Fe-4S] cluster</name>
        <dbReference type="ChEBI" id="CHEBI:49883"/>
    </ligand>
</feature>
<feature type="binding site" evidence="1">
    <location>
        <position position="125"/>
    </location>
    <ligand>
        <name>(2E)-4-hydroxy-3-methylbut-2-enyl diphosphate</name>
        <dbReference type="ChEBI" id="CHEBI:128753"/>
    </ligand>
</feature>
<feature type="binding site" evidence="1">
    <location>
        <position position="125"/>
    </location>
    <ligand>
        <name>dimethylallyl diphosphate</name>
        <dbReference type="ChEBI" id="CHEBI:57623"/>
    </ligand>
</feature>
<feature type="binding site" evidence="1">
    <location>
        <position position="125"/>
    </location>
    <ligand>
        <name>isopentenyl diphosphate</name>
        <dbReference type="ChEBI" id="CHEBI:128769"/>
    </ligand>
</feature>
<feature type="binding site" evidence="1">
    <location>
        <position position="165"/>
    </location>
    <ligand>
        <name>(2E)-4-hydroxy-3-methylbut-2-enyl diphosphate</name>
        <dbReference type="ChEBI" id="CHEBI:128753"/>
    </ligand>
</feature>
<feature type="binding site" evidence="1">
    <location>
        <position position="195"/>
    </location>
    <ligand>
        <name>[4Fe-4S] cluster</name>
        <dbReference type="ChEBI" id="CHEBI:49883"/>
    </ligand>
</feature>
<feature type="binding site" evidence="1">
    <location>
        <position position="223"/>
    </location>
    <ligand>
        <name>(2E)-4-hydroxy-3-methylbut-2-enyl diphosphate</name>
        <dbReference type="ChEBI" id="CHEBI:128753"/>
    </ligand>
</feature>
<feature type="binding site" evidence="1">
    <location>
        <position position="223"/>
    </location>
    <ligand>
        <name>dimethylallyl diphosphate</name>
        <dbReference type="ChEBI" id="CHEBI:57623"/>
    </ligand>
</feature>
<feature type="binding site" evidence="1">
    <location>
        <position position="223"/>
    </location>
    <ligand>
        <name>isopentenyl diphosphate</name>
        <dbReference type="ChEBI" id="CHEBI:128769"/>
    </ligand>
</feature>
<feature type="binding site" evidence="1">
    <location>
        <position position="224"/>
    </location>
    <ligand>
        <name>(2E)-4-hydroxy-3-methylbut-2-enyl diphosphate</name>
        <dbReference type="ChEBI" id="CHEBI:128753"/>
    </ligand>
</feature>
<feature type="binding site" evidence="1">
    <location>
        <position position="224"/>
    </location>
    <ligand>
        <name>dimethylallyl diphosphate</name>
        <dbReference type="ChEBI" id="CHEBI:57623"/>
    </ligand>
</feature>
<feature type="binding site" evidence="1">
    <location>
        <position position="224"/>
    </location>
    <ligand>
        <name>isopentenyl diphosphate</name>
        <dbReference type="ChEBI" id="CHEBI:128769"/>
    </ligand>
</feature>
<feature type="binding site" evidence="1">
    <location>
        <position position="225"/>
    </location>
    <ligand>
        <name>(2E)-4-hydroxy-3-methylbut-2-enyl diphosphate</name>
        <dbReference type="ChEBI" id="CHEBI:128753"/>
    </ligand>
</feature>
<feature type="binding site" evidence="1">
    <location>
        <position position="225"/>
    </location>
    <ligand>
        <name>dimethylallyl diphosphate</name>
        <dbReference type="ChEBI" id="CHEBI:57623"/>
    </ligand>
</feature>
<feature type="binding site" evidence="1">
    <location>
        <position position="225"/>
    </location>
    <ligand>
        <name>isopentenyl diphosphate</name>
        <dbReference type="ChEBI" id="CHEBI:128769"/>
    </ligand>
</feature>
<feature type="binding site" evidence="1">
    <location>
        <position position="267"/>
    </location>
    <ligand>
        <name>(2E)-4-hydroxy-3-methylbut-2-enyl diphosphate</name>
        <dbReference type="ChEBI" id="CHEBI:128753"/>
    </ligand>
</feature>
<feature type="binding site" evidence="1">
    <location>
        <position position="267"/>
    </location>
    <ligand>
        <name>dimethylallyl diphosphate</name>
        <dbReference type="ChEBI" id="CHEBI:57623"/>
    </ligand>
</feature>
<feature type="binding site" evidence="1">
    <location>
        <position position="267"/>
    </location>
    <ligand>
        <name>isopentenyl diphosphate</name>
        <dbReference type="ChEBI" id="CHEBI:128769"/>
    </ligand>
</feature>